<reference key="1">
    <citation type="journal article" date="2006" name="Proc. Natl. Acad. Sci. U.S.A.">
        <title>Evolution of sensory complexity recorded in a myxobacterial genome.</title>
        <authorList>
            <person name="Goldman B.S."/>
            <person name="Nierman W.C."/>
            <person name="Kaiser D."/>
            <person name="Slater S.C."/>
            <person name="Durkin A.S."/>
            <person name="Eisen J.A."/>
            <person name="Ronning C.M."/>
            <person name="Barbazuk W.B."/>
            <person name="Blanchard M."/>
            <person name="Field C."/>
            <person name="Halling C."/>
            <person name="Hinkle G."/>
            <person name="Iartchuk O."/>
            <person name="Kim H.S."/>
            <person name="Mackenzie C."/>
            <person name="Madupu R."/>
            <person name="Miller N."/>
            <person name="Shvartsbeyn A."/>
            <person name="Sullivan S.A."/>
            <person name="Vaudin M."/>
            <person name="Wiegand R."/>
            <person name="Kaplan H.B."/>
        </authorList>
    </citation>
    <scope>NUCLEOTIDE SEQUENCE [LARGE SCALE GENOMIC DNA]</scope>
    <source>
        <strain>DK1622</strain>
    </source>
</reference>
<sequence length="288" mass="30747">MSQTYLSLTVELPEEASEAVQDLLHESGALGLEVRDREAPLMPGVRGPNPGEAIIIGYFDERDTAESARDEVASSFPEAKLTLDEQPQQDWSNEWKSLIKSVHVGRLWVGPPWDKANAPAGTVQLVIEPKMAFGTGDHPTTSLCLAAVDAYMAEHPGAAVLDVGTGTGVLAIAAKKLGAGRTVATDNDPISVELAQENQAENGTPDIEVSGKELTQVEGTFDLVLANILANTLIELAPLIVAKTKDRLVLAGVLSHQRADVEAAYRNLGLTVLTGATQGEWVRIDLQR</sequence>
<feature type="chain" id="PRO_1000072793" description="Ribosomal protein L11 methyltransferase">
    <location>
        <begin position="1"/>
        <end position="288"/>
    </location>
</feature>
<feature type="binding site" evidence="1">
    <location>
        <position position="141"/>
    </location>
    <ligand>
        <name>S-adenosyl-L-methionine</name>
        <dbReference type="ChEBI" id="CHEBI:59789"/>
    </ligand>
</feature>
<feature type="binding site" evidence="1">
    <location>
        <position position="164"/>
    </location>
    <ligand>
        <name>S-adenosyl-L-methionine</name>
        <dbReference type="ChEBI" id="CHEBI:59789"/>
    </ligand>
</feature>
<feature type="binding site" evidence="1">
    <location>
        <position position="186"/>
    </location>
    <ligand>
        <name>S-adenosyl-L-methionine</name>
        <dbReference type="ChEBI" id="CHEBI:59789"/>
    </ligand>
</feature>
<feature type="binding site" evidence="1">
    <location>
        <position position="227"/>
    </location>
    <ligand>
        <name>S-adenosyl-L-methionine</name>
        <dbReference type="ChEBI" id="CHEBI:59789"/>
    </ligand>
</feature>
<evidence type="ECO:0000255" key="1">
    <source>
        <dbReference type="HAMAP-Rule" id="MF_00735"/>
    </source>
</evidence>
<comment type="function">
    <text evidence="1">Methylates ribosomal protein L11.</text>
</comment>
<comment type="catalytic activity">
    <reaction evidence="1">
        <text>L-lysyl-[protein] + 3 S-adenosyl-L-methionine = N(6),N(6),N(6)-trimethyl-L-lysyl-[protein] + 3 S-adenosyl-L-homocysteine + 3 H(+)</text>
        <dbReference type="Rhea" id="RHEA:54192"/>
        <dbReference type="Rhea" id="RHEA-COMP:9752"/>
        <dbReference type="Rhea" id="RHEA-COMP:13826"/>
        <dbReference type="ChEBI" id="CHEBI:15378"/>
        <dbReference type="ChEBI" id="CHEBI:29969"/>
        <dbReference type="ChEBI" id="CHEBI:57856"/>
        <dbReference type="ChEBI" id="CHEBI:59789"/>
        <dbReference type="ChEBI" id="CHEBI:61961"/>
    </reaction>
</comment>
<comment type="subcellular location">
    <subcellularLocation>
        <location evidence="1">Cytoplasm</location>
    </subcellularLocation>
</comment>
<comment type="similarity">
    <text evidence="1">Belongs to the methyltransferase superfamily. PrmA family.</text>
</comment>
<dbReference type="EC" id="2.1.1.-" evidence="1"/>
<dbReference type="EMBL" id="CP000113">
    <property type="protein sequence ID" value="ABF91234.1"/>
    <property type="molecule type" value="Genomic_DNA"/>
</dbReference>
<dbReference type="RefSeq" id="WP_011551259.1">
    <property type="nucleotide sequence ID" value="NC_008095.1"/>
</dbReference>
<dbReference type="SMR" id="Q1DD74"/>
<dbReference type="STRING" id="246197.MXAN_1139"/>
<dbReference type="EnsemblBacteria" id="ABF91234">
    <property type="protein sequence ID" value="ABF91234"/>
    <property type="gene ID" value="MXAN_1139"/>
</dbReference>
<dbReference type="GeneID" id="41358590"/>
<dbReference type="KEGG" id="mxa:MXAN_1139"/>
<dbReference type="eggNOG" id="COG2264">
    <property type="taxonomic scope" value="Bacteria"/>
</dbReference>
<dbReference type="HOGENOM" id="CLU_049382_0_1_7"/>
<dbReference type="OrthoDB" id="9785995at2"/>
<dbReference type="Proteomes" id="UP000002402">
    <property type="component" value="Chromosome"/>
</dbReference>
<dbReference type="GO" id="GO:0005737">
    <property type="term" value="C:cytoplasm"/>
    <property type="evidence" value="ECO:0007669"/>
    <property type="project" value="UniProtKB-SubCell"/>
</dbReference>
<dbReference type="GO" id="GO:0016279">
    <property type="term" value="F:protein-lysine N-methyltransferase activity"/>
    <property type="evidence" value="ECO:0007669"/>
    <property type="project" value="RHEA"/>
</dbReference>
<dbReference type="GO" id="GO:0032259">
    <property type="term" value="P:methylation"/>
    <property type="evidence" value="ECO:0007669"/>
    <property type="project" value="UniProtKB-KW"/>
</dbReference>
<dbReference type="CDD" id="cd02440">
    <property type="entry name" value="AdoMet_MTases"/>
    <property type="match status" value="1"/>
</dbReference>
<dbReference type="Gene3D" id="3.40.50.150">
    <property type="entry name" value="Vaccinia Virus protein VP39"/>
    <property type="match status" value="1"/>
</dbReference>
<dbReference type="HAMAP" id="MF_00735">
    <property type="entry name" value="Methyltr_PrmA"/>
    <property type="match status" value="1"/>
</dbReference>
<dbReference type="InterPro" id="IPR050078">
    <property type="entry name" value="Ribosomal_L11_MeTrfase_PrmA"/>
</dbReference>
<dbReference type="InterPro" id="IPR004498">
    <property type="entry name" value="Ribosomal_PrmA_MeTrfase"/>
</dbReference>
<dbReference type="InterPro" id="IPR029063">
    <property type="entry name" value="SAM-dependent_MTases_sf"/>
</dbReference>
<dbReference type="PANTHER" id="PTHR43648">
    <property type="entry name" value="ELECTRON TRANSFER FLAVOPROTEIN BETA SUBUNIT LYSINE METHYLTRANSFERASE"/>
    <property type="match status" value="1"/>
</dbReference>
<dbReference type="PANTHER" id="PTHR43648:SF1">
    <property type="entry name" value="ELECTRON TRANSFER FLAVOPROTEIN BETA SUBUNIT LYSINE METHYLTRANSFERASE"/>
    <property type="match status" value="1"/>
</dbReference>
<dbReference type="Pfam" id="PF06325">
    <property type="entry name" value="PrmA"/>
    <property type="match status" value="1"/>
</dbReference>
<dbReference type="PIRSF" id="PIRSF000401">
    <property type="entry name" value="RPL11_MTase"/>
    <property type="match status" value="1"/>
</dbReference>
<dbReference type="SUPFAM" id="SSF53335">
    <property type="entry name" value="S-adenosyl-L-methionine-dependent methyltransferases"/>
    <property type="match status" value="1"/>
</dbReference>
<organism>
    <name type="scientific">Myxococcus xanthus (strain DK1622)</name>
    <dbReference type="NCBI Taxonomy" id="246197"/>
    <lineage>
        <taxon>Bacteria</taxon>
        <taxon>Pseudomonadati</taxon>
        <taxon>Myxococcota</taxon>
        <taxon>Myxococcia</taxon>
        <taxon>Myxococcales</taxon>
        <taxon>Cystobacterineae</taxon>
        <taxon>Myxococcaceae</taxon>
        <taxon>Myxococcus</taxon>
    </lineage>
</organism>
<proteinExistence type="inferred from homology"/>
<name>PRMA_MYXXD</name>
<gene>
    <name evidence="1" type="primary">prmA</name>
    <name type="ordered locus">MXAN_1139</name>
</gene>
<accession>Q1DD74</accession>
<protein>
    <recommendedName>
        <fullName evidence="1">Ribosomal protein L11 methyltransferase</fullName>
        <shortName evidence="1">L11 Mtase</shortName>
        <ecNumber evidence="1">2.1.1.-</ecNumber>
    </recommendedName>
</protein>
<keyword id="KW-0963">Cytoplasm</keyword>
<keyword id="KW-0489">Methyltransferase</keyword>
<keyword id="KW-1185">Reference proteome</keyword>
<keyword id="KW-0949">S-adenosyl-L-methionine</keyword>
<keyword id="KW-0808">Transferase</keyword>